<dbReference type="EC" id="7.4.2.8" evidence="1"/>
<dbReference type="EMBL" id="CP001147">
    <property type="protein sequence ID" value="ACI20371.1"/>
    <property type="molecule type" value="Genomic_DNA"/>
</dbReference>
<dbReference type="RefSeq" id="WP_012545108.1">
    <property type="nucleotide sequence ID" value="NC_011296.1"/>
</dbReference>
<dbReference type="RefSeq" id="YP_002248850.1">
    <property type="nucleotide sequence ID" value="NC_011296.1"/>
</dbReference>
<dbReference type="SMR" id="B5YKT5"/>
<dbReference type="FunCoup" id="B5YKT5">
    <property type="interactions" value="516"/>
</dbReference>
<dbReference type="STRING" id="289376.THEYE_A1021"/>
<dbReference type="EnsemblBacteria" id="ACI20371">
    <property type="protein sequence ID" value="ACI20371"/>
    <property type="gene ID" value="THEYE_A1021"/>
</dbReference>
<dbReference type="KEGG" id="tye:THEYE_A1021"/>
<dbReference type="PATRIC" id="fig|289376.4.peg.1002"/>
<dbReference type="eggNOG" id="COG0653">
    <property type="taxonomic scope" value="Bacteria"/>
</dbReference>
<dbReference type="HOGENOM" id="CLU_005314_3_0_0"/>
<dbReference type="InParanoid" id="B5YKT5"/>
<dbReference type="OrthoDB" id="9805579at2"/>
<dbReference type="Proteomes" id="UP000000718">
    <property type="component" value="Chromosome"/>
</dbReference>
<dbReference type="GO" id="GO:0031522">
    <property type="term" value="C:cell envelope Sec protein transport complex"/>
    <property type="evidence" value="ECO:0000318"/>
    <property type="project" value="GO_Central"/>
</dbReference>
<dbReference type="GO" id="GO:0005737">
    <property type="term" value="C:cytoplasm"/>
    <property type="evidence" value="ECO:0007669"/>
    <property type="project" value="UniProtKB-SubCell"/>
</dbReference>
<dbReference type="GO" id="GO:0005886">
    <property type="term" value="C:plasma membrane"/>
    <property type="evidence" value="ECO:0000318"/>
    <property type="project" value="GO_Central"/>
</dbReference>
<dbReference type="GO" id="GO:0005524">
    <property type="term" value="F:ATP binding"/>
    <property type="evidence" value="ECO:0000318"/>
    <property type="project" value="GO_Central"/>
</dbReference>
<dbReference type="GO" id="GO:0046872">
    <property type="term" value="F:metal ion binding"/>
    <property type="evidence" value="ECO:0007669"/>
    <property type="project" value="UniProtKB-KW"/>
</dbReference>
<dbReference type="GO" id="GO:0008564">
    <property type="term" value="F:protein-exporting ATPase activity"/>
    <property type="evidence" value="ECO:0007669"/>
    <property type="project" value="UniProtKB-EC"/>
</dbReference>
<dbReference type="GO" id="GO:0065002">
    <property type="term" value="P:intracellular protein transmembrane transport"/>
    <property type="evidence" value="ECO:0007669"/>
    <property type="project" value="UniProtKB-UniRule"/>
</dbReference>
<dbReference type="GO" id="GO:0017038">
    <property type="term" value="P:protein import"/>
    <property type="evidence" value="ECO:0007669"/>
    <property type="project" value="InterPro"/>
</dbReference>
<dbReference type="GO" id="GO:0006605">
    <property type="term" value="P:protein targeting"/>
    <property type="evidence" value="ECO:0007669"/>
    <property type="project" value="UniProtKB-UniRule"/>
</dbReference>
<dbReference type="GO" id="GO:0043952">
    <property type="term" value="P:protein transport by the Sec complex"/>
    <property type="evidence" value="ECO:0000318"/>
    <property type="project" value="GO_Central"/>
</dbReference>
<dbReference type="CDD" id="cd17928">
    <property type="entry name" value="DEXDc_SecA"/>
    <property type="match status" value="1"/>
</dbReference>
<dbReference type="CDD" id="cd18803">
    <property type="entry name" value="SF2_C_secA"/>
    <property type="match status" value="1"/>
</dbReference>
<dbReference type="FunFam" id="3.40.50.300:FF:000113">
    <property type="entry name" value="Preprotein translocase subunit SecA"/>
    <property type="match status" value="1"/>
</dbReference>
<dbReference type="FunFam" id="3.90.1440.10:FF:000001">
    <property type="entry name" value="Preprotein translocase subunit SecA"/>
    <property type="match status" value="1"/>
</dbReference>
<dbReference type="FunFam" id="1.10.3060.10:FF:000003">
    <property type="entry name" value="Protein translocase subunit SecA"/>
    <property type="match status" value="1"/>
</dbReference>
<dbReference type="FunFam" id="3.40.50.300:FF:000334">
    <property type="entry name" value="Protein translocase subunit SecA"/>
    <property type="match status" value="1"/>
</dbReference>
<dbReference type="Gene3D" id="1.10.3060.10">
    <property type="entry name" value="Helical scaffold and wing domains of SecA"/>
    <property type="match status" value="1"/>
</dbReference>
<dbReference type="Gene3D" id="3.40.50.300">
    <property type="entry name" value="P-loop containing nucleotide triphosphate hydrolases"/>
    <property type="match status" value="2"/>
</dbReference>
<dbReference type="Gene3D" id="3.90.1440.10">
    <property type="entry name" value="SecA, preprotein cross-linking domain"/>
    <property type="match status" value="1"/>
</dbReference>
<dbReference type="HAMAP" id="MF_01382">
    <property type="entry name" value="SecA"/>
    <property type="match status" value="1"/>
</dbReference>
<dbReference type="InterPro" id="IPR014001">
    <property type="entry name" value="Helicase_ATP-bd"/>
</dbReference>
<dbReference type="InterPro" id="IPR001650">
    <property type="entry name" value="Helicase_C-like"/>
</dbReference>
<dbReference type="InterPro" id="IPR027417">
    <property type="entry name" value="P-loop_NTPase"/>
</dbReference>
<dbReference type="InterPro" id="IPR004027">
    <property type="entry name" value="SEC_C_motif"/>
</dbReference>
<dbReference type="InterPro" id="IPR000185">
    <property type="entry name" value="SecA"/>
</dbReference>
<dbReference type="InterPro" id="IPR020937">
    <property type="entry name" value="SecA_CS"/>
</dbReference>
<dbReference type="InterPro" id="IPR011115">
    <property type="entry name" value="SecA_DEAD"/>
</dbReference>
<dbReference type="InterPro" id="IPR014018">
    <property type="entry name" value="SecA_motor_DEAD"/>
</dbReference>
<dbReference type="InterPro" id="IPR011130">
    <property type="entry name" value="SecA_preprotein_X-link_dom"/>
</dbReference>
<dbReference type="InterPro" id="IPR044722">
    <property type="entry name" value="SecA_SF2_C"/>
</dbReference>
<dbReference type="InterPro" id="IPR011116">
    <property type="entry name" value="SecA_Wing/Scaffold"/>
</dbReference>
<dbReference type="InterPro" id="IPR036266">
    <property type="entry name" value="SecA_Wing/Scaffold_sf"/>
</dbReference>
<dbReference type="InterPro" id="IPR036670">
    <property type="entry name" value="SecA_X-link_sf"/>
</dbReference>
<dbReference type="NCBIfam" id="NF009538">
    <property type="entry name" value="PRK12904.1"/>
    <property type="match status" value="1"/>
</dbReference>
<dbReference type="NCBIfam" id="TIGR00963">
    <property type="entry name" value="secA"/>
    <property type="match status" value="1"/>
</dbReference>
<dbReference type="PANTHER" id="PTHR30612:SF0">
    <property type="entry name" value="CHLOROPLAST PROTEIN-TRANSPORTING ATPASE"/>
    <property type="match status" value="1"/>
</dbReference>
<dbReference type="PANTHER" id="PTHR30612">
    <property type="entry name" value="SECA INNER MEMBRANE COMPONENT OF SEC PROTEIN SECRETION SYSTEM"/>
    <property type="match status" value="1"/>
</dbReference>
<dbReference type="Pfam" id="PF21090">
    <property type="entry name" value="P-loop_SecA"/>
    <property type="match status" value="1"/>
</dbReference>
<dbReference type="Pfam" id="PF02810">
    <property type="entry name" value="SEC-C"/>
    <property type="match status" value="1"/>
</dbReference>
<dbReference type="Pfam" id="PF07517">
    <property type="entry name" value="SecA_DEAD"/>
    <property type="match status" value="1"/>
</dbReference>
<dbReference type="Pfam" id="PF01043">
    <property type="entry name" value="SecA_PP_bind"/>
    <property type="match status" value="1"/>
</dbReference>
<dbReference type="Pfam" id="PF07516">
    <property type="entry name" value="SecA_SW"/>
    <property type="match status" value="1"/>
</dbReference>
<dbReference type="PRINTS" id="PR00906">
    <property type="entry name" value="SECA"/>
</dbReference>
<dbReference type="SMART" id="SM00957">
    <property type="entry name" value="SecA_DEAD"/>
    <property type="match status" value="1"/>
</dbReference>
<dbReference type="SMART" id="SM00958">
    <property type="entry name" value="SecA_PP_bind"/>
    <property type="match status" value="1"/>
</dbReference>
<dbReference type="SUPFAM" id="SSF81886">
    <property type="entry name" value="Helical scaffold and wing domains of SecA"/>
    <property type="match status" value="1"/>
</dbReference>
<dbReference type="SUPFAM" id="SSF52540">
    <property type="entry name" value="P-loop containing nucleoside triphosphate hydrolases"/>
    <property type="match status" value="2"/>
</dbReference>
<dbReference type="SUPFAM" id="SSF81767">
    <property type="entry name" value="Pre-protein crosslinking domain of SecA"/>
    <property type="match status" value="1"/>
</dbReference>
<dbReference type="PROSITE" id="PS01312">
    <property type="entry name" value="SECA"/>
    <property type="match status" value="1"/>
</dbReference>
<dbReference type="PROSITE" id="PS51196">
    <property type="entry name" value="SECA_MOTOR_DEAD"/>
    <property type="match status" value="1"/>
</dbReference>
<reference key="1">
    <citation type="submission" date="2008-08" db="EMBL/GenBank/DDBJ databases">
        <title>The complete genome sequence of Thermodesulfovibrio yellowstonii strain ATCC 51303 / DSM 11347 / YP87.</title>
        <authorList>
            <person name="Dodson R.J."/>
            <person name="Durkin A.S."/>
            <person name="Wu M."/>
            <person name="Eisen J."/>
            <person name="Sutton G."/>
        </authorList>
    </citation>
    <scope>NUCLEOTIDE SEQUENCE [LARGE SCALE GENOMIC DNA]</scope>
    <source>
        <strain>ATCC 51303 / DSM 11347 / YP87</strain>
    </source>
</reference>
<name>SECA_THEYD</name>
<feature type="chain" id="PRO_1000145073" description="Protein translocase subunit SecA">
    <location>
        <begin position="1"/>
        <end position="880"/>
    </location>
</feature>
<feature type="region of interest" description="Disordered" evidence="2">
    <location>
        <begin position="837"/>
        <end position="871"/>
    </location>
</feature>
<feature type="compositionally biased region" description="Basic and acidic residues" evidence="2">
    <location>
        <begin position="841"/>
        <end position="860"/>
    </location>
</feature>
<feature type="binding site" evidence="1">
    <location>
        <position position="86"/>
    </location>
    <ligand>
        <name>ATP</name>
        <dbReference type="ChEBI" id="CHEBI:30616"/>
    </ligand>
</feature>
<feature type="binding site" evidence="1">
    <location>
        <begin position="104"/>
        <end position="108"/>
    </location>
    <ligand>
        <name>ATP</name>
        <dbReference type="ChEBI" id="CHEBI:30616"/>
    </ligand>
</feature>
<feature type="binding site" evidence="1">
    <location>
        <position position="511"/>
    </location>
    <ligand>
        <name>ATP</name>
        <dbReference type="ChEBI" id="CHEBI:30616"/>
    </ligand>
</feature>
<feature type="binding site" evidence="1">
    <location>
        <position position="864"/>
    </location>
    <ligand>
        <name>Zn(2+)</name>
        <dbReference type="ChEBI" id="CHEBI:29105"/>
    </ligand>
</feature>
<feature type="binding site" evidence="1">
    <location>
        <position position="866"/>
    </location>
    <ligand>
        <name>Zn(2+)</name>
        <dbReference type="ChEBI" id="CHEBI:29105"/>
    </ligand>
</feature>
<feature type="binding site" evidence="1">
    <location>
        <position position="875"/>
    </location>
    <ligand>
        <name>Zn(2+)</name>
        <dbReference type="ChEBI" id="CHEBI:29105"/>
    </ligand>
</feature>
<feature type="binding site" evidence="1">
    <location>
        <position position="876"/>
    </location>
    <ligand>
        <name>Zn(2+)</name>
        <dbReference type="ChEBI" id="CHEBI:29105"/>
    </ligand>
</feature>
<accession>B5YKT5</accession>
<organism>
    <name type="scientific">Thermodesulfovibrio yellowstonii (strain ATCC 51303 / DSM 11347 / YP87)</name>
    <dbReference type="NCBI Taxonomy" id="289376"/>
    <lineage>
        <taxon>Bacteria</taxon>
        <taxon>Pseudomonadati</taxon>
        <taxon>Nitrospirota</taxon>
        <taxon>Thermodesulfovibrionia</taxon>
        <taxon>Thermodesulfovibrionales</taxon>
        <taxon>Thermodesulfovibrionaceae</taxon>
        <taxon>Thermodesulfovibrio</taxon>
    </lineage>
</organism>
<proteinExistence type="inferred from homology"/>
<sequence length="880" mass="101086">MVKILEKIFGTKNERELKRYFTIVEDINRLESQISSLSDEKLKQKTDEFRERLAKGESLDDILKEAFAVVREVAKRTLGMRHFDVQLVGGLVLHEGKIAEMKTGEGKTLVATLAAYLNALEGKGVHIVTVNDYLARRDVQWMGAIYNFLGLSVGVIQPDASFLYDPNYRLPDRRFDRLRPCSKKEAYLADITYGTNNEFGFDYLRDNMRYSIDELCQRELNYAIVDEVDSILIDEARTPLIISGPSEESTDIYYAVNRIIKYLKPENDFKLDEKLKTVVLTEQGSQKAEKLLGIDNLYNPSNIQVVHHINQAIRAHYFFKKEVDYVVKDGKIVIVDEFTGRLLEGRRWSDGLHQAIEAKEGLKIEAENQTLATITFQNYFRMYKKLAGMTGTADTEASEFAEIYNLEVVVIPTHKPMIREDYPDAVYKTEKAKYEAVVKEIEECYKVGRPVLVGTTSIEKSELISKMLKKKGVPHNVLNAKYHDKEAEIVAQAGRIGAVTIATNMAGRGTDILLGGNPEFLAREMLAGKDYTEEEYKKALEKAKEICKEEHDKVVSLGGLHIIGTERHESRRIDNQLRGRAGRQGDPGSSRFYLSLEDELLRLFGGERLQSLMHFLKIEDDTPIENKMVSKAIENAQKRVEAHNFDIRKHLLKYDDVMNSQRNEIYSFRKEVLESDSLKDKVFELLEIEIDEMVDFYLAQESEGVEKLKEQLSARFDIEVDLSNKSKDEIKEYLLEKLREAYEKKEQKIGQELMRDVEKMIFLHVIDTKWKDHLLGIDHIKEGIGLRGYAQRDPLVEYKKEAFELFEEMSRNIISDILTRLFKIQIKEESQVKVARAQKIQRSDGDGARRPVEKPKKIGRNDPCPCGSGKKYKKCCGKNS</sequence>
<evidence type="ECO:0000255" key="1">
    <source>
        <dbReference type="HAMAP-Rule" id="MF_01382"/>
    </source>
</evidence>
<evidence type="ECO:0000256" key="2">
    <source>
        <dbReference type="SAM" id="MobiDB-lite"/>
    </source>
</evidence>
<keyword id="KW-0067">ATP-binding</keyword>
<keyword id="KW-0997">Cell inner membrane</keyword>
<keyword id="KW-1003">Cell membrane</keyword>
<keyword id="KW-0963">Cytoplasm</keyword>
<keyword id="KW-0472">Membrane</keyword>
<keyword id="KW-0479">Metal-binding</keyword>
<keyword id="KW-0547">Nucleotide-binding</keyword>
<keyword id="KW-0653">Protein transport</keyword>
<keyword id="KW-1185">Reference proteome</keyword>
<keyword id="KW-1278">Translocase</keyword>
<keyword id="KW-0811">Translocation</keyword>
<keyword id="KW-0813">Transport</keyword>
<keyword id="KW-0862">Zinc</keyword>
<comment type="function">
    <text evidence="1">Part of the Sec protein translocase complex. Interacts with the SecYEG preprotein conducting channel. Has a central role in coupling the hydrolysis of ATP to the transfer of proteins into and across the cell membrane, serving as an ATP-driven molecular motor driving the stepwise translocation of polypeptide chains across the membrane.</text>
</comment>
<comment type="catalytic activity">
    <reaction evidence="1">
        <text>ATP + H2O + cellular proteinSide 1 = ADP + phosphate + cellular proteinSide 2.</text>
        <dbReference type="EC" id="7.4.2.8"/>
    </reaction>
</comment>
<comment type="cofactor">
    <cofactor evidence="1">
        <name>Zn(2+)</name>
        <dbReference type="ChEBI" id="CHEBI:29105"/>
    </cofactor>
    <text evidence="1">May bind 1 zinc ion per subunit.</text>
</comment>
<comment type="subunit">
    <text evidence="1">Monomer and homodimer. Part of the essential Sec protein translocation apparatus which comprises SecA, SecYEG and auxiliary proteins SecDF. Other proteins may also be involved.</text>
</comment>
<comment type="subcellular location">
    <subcellularLocation>
        <location evidence="1">Cell inner membrane</location>
        <topology evidence="1">Peripheral membrane protein</topology>
        <orientation evidence="1">Cytoplasmic side</orientation>
    </subcellularLocation>
    <subcellularLocation>
        <location evidence="1">Cytoplasm</location>
    </subcellularLocation>
    <text evidence="1">Distribution is 50-50.</text>
</comment>
<comment type="similarity">
    <text evidence="1">Belongs to the SecA family.</text>
</comment>
<protein>
    <recommendedName>
        <fullName evidence="1">Protein translocase subunit SecA</fullName>
        <ecNumber evidence="1">7.4.2.8</ecNumber>
    </recommendedName>
</protein>
<gene>
    <name evidence="1" type="primary">secA</name>
    <name type="ordered locus">THEYE_A1021</name>
</gene>